<organism>
    <name type="scientific">Xenopus borealis</name>
    <name type="common">Kenyan clawed frog</name>
    <dbReference type="NCBI Taxonomy" id="8354"/>
    <lineage>
        <taxon>Eukaryota</taxon>
        <taxon>Metazoa</taxon>
        <taxon>Chordata</taxon>
        <taxon>Craniata</taxon>
        <taxon>Vertebrata</taxon>
        <taxon>Euteleostomi</taxon>
        <taxon>Amphibia</taxon>
        <taxon>Batrachia</taxon>
        <taxon>Anura</taxon>
        <taxon>Pipoidea</taxon>
        <taxon>Pipidae</taxon>
        <taxon>Xenopodinae</taxon>
        <taxon>Xenopus</taxon>
        <taxon>Xenopus</taxon>
    </lineage>
</organism>
<accession>Q90ZZ5</accession>
<protein>
    <recommendedName>
        <fullName>Nanos homolog 1</fullName>
    </recommendedName>
    <alternativeName>
        <fullName>Xcat-2 protein</fullName>
    </alternativeName>
</protein>
<keyword id="KW-0963">Cytoplasm</keyword>
<keyword id="KW-0479">Metal-binding</keyword>
<keyword id="KW-0678">Repressor</keyword>
<keyword id="KW-0694">RNA-binding</keyword>
<keyword id="KW-0810">Translation regulation</keyword>
<keyword id="KW-0862">Zinc</keyword>
<keyword id="KW-0863">Zinc-finger</keyword>
<evidence type="ECO:0000250" key="1"/>
<evidence type="ECO:0000255" key="2">
    <source>
        <dbReference type="PROSITE-ProRule" id="PRU00855"/>
    </source>
</evidence>
<evidence type="ECO:0000256" key="3">
    <source>
        <dbReference type="SAM" id="MobiDB-lite"/>
    </source>
</evidence>
<comment type="function">
    <text evidence="1">Acts as a translational repressor. Can mediate repression affecting different steps in the translation process: cap-driven, IRES-driven, polyadenylated RNAs or nonpolyadenylated RNAs. Essential for the development of primordial germ cells (PGCs) by ensuring their proper migration and survival (By similarity).</text>
</comment>
<comment type="subunit">
    <text evidence="1">Interacts with ccnb1.</text>
</comment>
<comment type="subcellular location">
    <subcellularLocation>
        <location evidence="1">Cytoplasm</location>
    </subcellularLocation>
    <subcellularLocation>
        <location evidence="1">Cytoplasm</location>
        <location evidence="1">Perinuclear region</location>
    </subcellularLocation>
    <text evidence="1">During early cleavage and blastula stages found close to the cell periphery in a germ plasm-like pattern. From gastrula stage on, detected predominantly in a perinuclear region (By similarity).</text>
</comment>
<comment type="domain">
    <text evidence="2">The Nanos-type zinc finger is composed of two C2HC motifs, each motif binding one molecule of zinc. It is essential for the translation repression activity of the protein.</text>
</comment>
<comment type="similarity">
    <text evidence="2">Belongs to the nanos family.</text>
</comment>
<feature type="chain" id="PRO_0000410977" description="Nanos homolog 1">
    <location>
        <begin position="1"/>
        <end position="128"/>
    </location>
</feature>
<feature type="zinc finger region" description="Nanos-type" evidence="2">
    <location>
        <begin position="60"/>
        <end position="114"/>
    </location>
</feature>
<feature type="region of interest" description="Essential for its translational repressor activity" evidence="1">
    <location>
        <begin position="7"/>
        <end position="23"/>
    </location>
</feature>
<feature type="region of interest" description="Disordered" evidence="3">
    <location>
        <begin position="23"/>
        <end position="56"/>
    </location>
</feature>
<feature type="short sequence motif" description="C2HC 1" evidence="2">
    <location>
        <begin position="61"/>
        <end position="88"/>
    </location>
</feature>
<feature type="short sequence motif" description="C2HC 2" evidence="2">
    <location>
        <begin position="96"/>
        <end position="112"/>
    </location>
</feature>
<feature type="binding site" evidence="2">
    <location>
        <position position="61"/>
    </location>
    <ligand>
        <name>Zn(2+)</name>
        <dbReference type="ChEBI" id="CHEBI:29105"/>
        <label>1</label>
    </ligand>
</feature>
<feature type="binding site" evidence="2">
    <location>
        <position position="64"/>
    </location>
    <ligand>
        <name>Zn(2+)</name>
        <dbReference type="ChEBI" id="CHEBI:29105"/>
        <label>1</label>
    </ligand>
</feature>
<feature type="binding site" evidence="2">
    <location>
        <position position="77"/>
    </location>
    <ligand>
        <name>Zn(2+)</name>
        <dbReference type="ChEBI" id="CHEBI:29105"/>
        <label>1</label>
    </ligand>
</feature>
<feature type="binding site" evidence="2">
    <location>
        <position position="88"/>
    </location>
    <ligand>
        <name>Zn(2+)</name>
        <dbReference type="ChEBI" id="CHEBI:29105"/>
        <label>1</label>
    </ligand>
</feature>
<feature type="binding site" evidence="2">
    <location>
        <position position="96"/>
    </location>
    <ligand>
        <name>Zn(2+)</name>
        <dbReference type="ChEBI" id="CHEBI:29105"/>
        <label>2</label>
    </ligand>
</feature>
<feature type="binding site" evidence="2">
    <location>
        <position position="99"/>
    </location>
    <ligand>
        <name>Zn(2+)</name>
        <dbReference type="ChEBI" id="CHEBI:29105"/>
        <label>2</label>
    </ligand>
</feature>
<feature type="binding site" evidence="2">
    <location>
        <position position="107"/>
    </location>
    <ligand>
        <name>Zn(2+)</name>
        <dbReference type="ChEBI" id="CHEBI:29105"/>
        <label>2</label>
    </ligand>
</feature>
<feature type="binding site" evidence="2">
    <location>
        <position position="112"/>
    </location>
    <ligand>
        <name>Zn(2+)</name>
        <dbReference type="ChEBI" id="CHEBI:29105"/>
        <label>2</label>
    </ligand>
</feature>
<dbReference type="EMBL" id="AF256087">
    <property type="protein sequence ID" value="AAK49296.1"/>
    <property type="molecule type" value="mRNA"/>
</dbReference>
<dbReference type="SMR" id="Q90ZZ5"/>
<dbReference type="GO" id="GO:0005737">
    <property type="term" value="C:cytoplasm"/>
    <property type="evidence" value="ECO:0000250"/>
    <property type="project" value="UniProtKB"/>
</dbReference>
<dbReference type="GO" id="GO:0060293">
    <property type="term" value="C:germ plasm"/>
    <property type="evidence" value="ECO:0000250"/>
    <property type="project" value="UniProtKB"/>
</dbReference>
<dbReference type="GO" id="GO:0048471">
    <property type="term" value="C:perinuclear region of cytoplasm"/>
    <property type="evidence" value="ECO:0000250"/>
    <property type="project" value="UniProtKB"/>
</dbReference>
<dbReference type="GO" id="GO:0003723">
    <property type="term" value="F:RNA binding"/>
    <property type="evidence" value="ECO:0007669"/>
    <property type="project" value="UniProtKB-KW"/>
</dbReference>
<dbReference type="GO" id="GO:0030371">
    <property type="term" value="F:translation repressor activity"/>
    <property type="evidence" value="ECO:0000250"/>
    <property type="project" value="UniProtKB"/>
</dbReference>
<dbReference type="GO" id="GO:0008270">
    <property type="term" value="F:zinc ion binding"/>
    <property type="evidence" value="ECO:0007669"/>
    <property type="project" value="UniProtKB-KW"/>
</dbReference>
<dbReference type="FunFam" id="4.10.60.30:FF:000001">
    <property type="entry name" value="nanos homolog 3"/>
    <property type="match status" value="1"/>
</dbReference>
<dbReference type="Gene3D" id="4.10.60.30">
    <property type="entry name" value="Nanos, RNA-binding domain"/>
    <property type="match status" value="1"/>
</dbReference>
<dbReference type="InterPro" id="IPR008705">
    <property type="entry name" value="Nanos/Xcar2"/>
</dbReference>
<dbReference type="InterPro" id="IPR038129">
    <property type="entry name" value="Nanos_sf"/>
</dbReference>
<dbReference type="InterPro" id="IPR024161">
    <property type="entry name" value="Znf_nanos-typ"/>
</dbReference>
<dbReference type="PANTHER" id="PTHR12887">
    <property type="entry name" value="NANOS PROTEIN"/>
    <property type="match status" value="1"/>
</dbReference>
<dbReference type="Pfam" id="PF05741">
    <property type="entry name" value="zf-nanos"/>
    <property type="match status" value="1"/>
</dbReference>
<dbReference type="PROSITE" id="PS51522">
    <property type="entry name" value="ZF_NANOS"/>
    <property type="match status" value="1"/>
</dbReference>
<gene>
    <name type="primary">nanos1</name>
    <name type="synonym">xcat-2</name>
</gene>
<reference key="1">
    <citation type="journal article" date="2011" name="Mech. Dev.">
        <title>Nanos1 functions as a translational repressor in the Xenopus germline.</title>
        <authorList>
            <person name="Lai F."/>
            <person name="Zhou Y."/>
            <person name="Luo X."/>
            <person name="Fox J."/>
            <person name="King M.L."/>
        </authorList>
    </citation>
    <scope>NUCLEOTIDE SEQUENCE [MRNA]</scope>
</reference>
<name>NANO1_XENBO</name>
<proteinExistence type="evidence at transcript level"/>
<sequence length="128" mass="14145">MDGGLCFDSWSDYLGLSSLISRGLQPRGEGENPSPRWNVSCPAPAEPLPSKEPEGRGYKGCGFCRSNKEAMSLYSSHRLRSLDGRVLCPVLRGYTCPLCGANGDWAHTMRYCPLRQLLRNPQSPRNGQ</sequence>